<keyword id="KW-0027">Amidation</keyword>
<keyword id="KW-0903">Direct protein sequencing</keyword>
<keyword id="KW-1015">Disulfide bond</keyword>
<keyword id="KW-0872">Ion channel impairing toxin</keyword>
<keyword id="KW-0528">Neurotoxin</keyword>
<keyword id="KW-0964">Secreted</keyword>
<keyword id="KW-0732">Signal</keyword>
<keyword id="KW-0800">Toxin</keyword>
<keyword id="KW-0738">Voltage-gated sodium channel impairing toxin</keyword>
<comment type="function">
    <text evidence="1 4">Beta toxins bind voltage-independently at site-4 of sodium channels (Nav) and shift the voltage of activation toward more negative potentials thereby affecting sodium channel activation and promoting spontaneous and repetitive firing (By similarity). Is lethal to mice but does not show toxicity to freshwater shrimp and crickets (PubMed:27130039).</text>
</comment>
<comment type="subcellular location">
    <subcellularLocation>
        <location evidence="5">Secreted</location>
    </subcellularLocation>
</comment>
<comment type="tissue specificity">
    <text evidence="11">Expressed by the venom gland.</text>
</comment>
<comment type="domain">
    <text evidence="9">Has the structural arrangement of an alpha-helix connected to antiparallel beta-sheets by disulfide bonds (CS-alpha/beta).</text>
</comment>
<comment type="mass spectrometry">
    <text>Average mass.</text>
</comment>
<comment type="miscellaneous">
    <text evidence="6">Is neutralized by the single-chain antibody fragment 10FG2.</text>
</comment>
<comment type="similarity">
    <text evidence="9">Belongs to the long (4 C-C) scorpion toxin superfamily. Sodium channel inhibitor family. Beta subfamily.</text>
</comment>
<protein>
    <recommendedName>
        <fullName evidence="7">Beta-toxin Ct1a</fullName>
    </recommendedName>
    <alternativeName>
        <fullName evidence="8">Beta-toxin Clt1</fullName>
    </alternativeName>
    <alternativeName>
        <fullName evidence="8">Neurotoxin 1</fullName>
    </alternativeName>
    <alternativeName>
        <fullName evidence="8">Toxin II.20.3.4</fullName>
    </alternativeName>
</protein>
<reference key="1">
    <citation type="journal article" date="2013" name="PLoS ONE">
        <title>Mass fingerprinting of the venom and transcriptome of venom gland of scorpion Centruroides tecomanus.</title>
        <authorList>
            <person name="Valdez-Velazquez L.L."/>
            <person name="Quintero-Hernandez V."/>
            <person name="Romero-Gutierrez M.T."/>
            <person name="Coronas F.I."/>
            <person name="Possani L.D."/>
        </authorList>
    </citation>
    <scope>NUCLEOTIDE SEQUENCE [MRNA]</scope>
    <scope>PROTEIN SEQUENCE OF 20-45</scope>
    <scope>PROBABLE AMIDATION AT ASN-85</scope>
    <scope>MASS SPECTROMETRY</scope>
    <source>
        <tissue>Venom</tissue>
        <tissue>Venom gland</tissue>
    </source>
</reference>
<reference key="2">
    <citation type="journal article" date="1988" name="Toxicon">
        <title>Amino acid sequence and physiological characterization of toxins from the venom of the scorpion Centruroides limpidus tecomanus Hoffmann.</title>
        <authorList>
            <person name="Martin B.M."/>
            <person name="Carbone E."/>
            <person name="Yatani A."/>
            <person name="Brown A.M."/>
            <person name="Ramirez A.N."/>
            <person name="Gurrola G.B."/>
            <person name="Possani L.D."/>
        </authorList>
    </citation>
    <scope>PROTEIN SEQUENCE OF 20-85</scope>
    <scope>SUBCELLULAR LOCATION</scope>
    <source>
        <tissue>Venom</tissue>
    </source>
</reference>
<reference key="3">
    <citation type="journal article" date="2016" name="Toxicon">
        <title>Comprehensive analysis of venom from the scorpion Centruroides tecomanus reveals compounds with antimicrobial, cytotoxic, and insecticidal activities.</title>
        <authorList>
            <person name="Valdez-Velazquez L.L."/>
            <person name="Romero-Gutierrez M.T."/>
            <person name="Delgado-Enciso I."/>
            <person name="Dobrovinskaya O."/>
            <person name="Melnikov V."/>
            <person name="Quintero-Hernandez V."/>
            <person name="Ceballos-Magana S.G."/>
            <person name="Gaitan-Hinojosa M.A."/>
            <person name="Coronas F.I."/>
            <person name="Puebla-Perez A.M."/>
            <person name="Zamudio F."/>
            <person name="De la Cruz-Garcia I."/>
            <person name="Vazquez-Vuelvas O.F."/>
            <person name="Soriano-Hernandez A.D."/>
            <person name="Possani L.D."/>
        </authorList>
    </citation>
    <scope>FUNCTION</scope>
    <scope>MASS SPECTROMETRY</scope>
    <source>
        <tissue>Venom</tissue>
    </source>
</reference>
<reference key="4">
    <citation type="journal article" date="2019" name="Toxins">
        <title>Generation of a broadly cross-neutralizing antibody fragment against several mexican scorpion venoms.</title>
        <authorList>
            <person name="Riano-Umbarila L."/>
            <person name="Gomez-Ramirez I.V."/>
            <person name="Ledezma-Candanoza L.M."/>
            <person name="Olamendi-Portugal T."/>
            <person name="Rodriguez-Rodriguez E.R."/>
            <person name="Fernandez-Taboada G."/>
            <person name="Possani L.D."/>
            <person name="Becerril B."/>
        </authorList>
    </citation>
    <scope>NEUTRALIZATION BY ANTIBODY</scope>
</reference>
<proteinExistence type="evidence at protein level"/>
<feature type="signal peptide" evidence="3">
    <location>
        <begin position="1"/>
        <end position="19"/>
    </location>
</feature>
<feature type="chain" id="PRO_0000066761" description="Beta-toxin Ct1a" evidence="3">
    <location>
        <begin position="20"/>
        <end position="85"/>
    </location>
</feature>
<feature type="domain" description="LCN-type CS-alpha/beta" evidence="2">
    <location>
        <begin position="20"/>
        <end position="85"/>
    </location>
</feature>
<feature type="modified residue" description="Asparagine amide" evidence="10">
    <location>
        <position position="85"/>
    </location>
</feature>
<feature type="disulfide bond" evidence="2">
    <location>
        <begin position="31"/>
        <end position="84"/>
    </location>
</feature>
<feature type="disulfide bond" evidence="2">
    <location>
        <begin position="35"/>
        <end position="60"/>
    </location>
</feature>
<feature type="disulfide bond" evidence="2">
    <location>
        <begin position="44"/>
        <end position="65"/>
    </location>
</feature>
<feature type="disulfide bond" evidence="2">
    <location>
        <begin position="48"/>
        <end position="67"/>
    </location>
</feature>
<feature type="sequence conflict" description="In Ref. 2; AA sequence." evidence="9" ref="2">
    <original>K</original>
    <variation>N</variation>
    <location>
        <position position="81"/>
    </location>
</feature>
<feature type="sequence conflict" description="In Ref. 2; AA sequence." evidence="9" ref="2">
    <original>N</original>
    <variation>S</variation>
    <location>
        <position position="85"/>
    </location>
</feature>
<organism>
    <name type="scientific">Centruroides tecomanus</name>
    <name type="common">Scorpion</name>
    <name type="synonym">Centruroides limpidus tecomanus</name>
    <dbReference type="NCBI Taxonomy" id="1028682"/>
    <lineage>
        <taxon>Eukaryota</taxon>
        <taxon>Metazoa</taxon>
        <taxon>Ecdysozoa</taxon>
        <taxon>Arthropoda</taxon>
        <taxon>Chelicerata</taxon>
        <taxon>Arachnida</taxon>
        <taxon>Scorpiones</taxon>
        <taxon>Buthida</taxon>
        <taxon>Buthoidea</taxon>
        <taxon>Buthidae</taxon>
        <taxon>Centruroides</taxon>
    </lineage>
</organism>
<accession>P18926</accession>
<accession>C0HLT9</accession>
<name>SCX1A_CENTE</name>
<dbReference type="EMBL" id="JZ122265">
    <property type="status" value="NOT_ANNOTATED_CDS"/>
    <property type="molecule type" value="mRNA"/>
</dbReference>
<dbReference type="PIR" id="A31188">
    <property type="entry name" value="A31188"/>
</dbReference>
<dbReference type="SMR" id="P18926"/>
<dbReference type="GO" id="GO:0005576">
    <property type="term" value="C:extracellular region"/>
    <property type="evidence" value="ECO:0000314"/>
    <property type="project" value="UniProtKB"/>
</dbReference>
<dbReference type="GO" id="GO:0019871">
    <property type="term" value="F:sodium channel inhibitor activity"/>
    <property type="evidence" value="ECO:0007669"/>
    <property type="project" value="InterPro"/>
</dbReference>
<dbReference type="GO" id="GO:0090729">
    <property type="term" value="F:toxin activity"/>
    <property type="evidence" value="ECO:0007669"/>
    <property type="project" value="UniProtKB-KW"/>
</dbReference>
<dbReference type="GO" id="GO:0006952">
    <property type="term" value="P:defense response"/>
    <property type="evidence" value="ECO:0007669"/>
    <property type="project" value="InterPro"/>
</dbReference>
<dbReference type="CDD" id="cd23106">
    <property type="entry name" value="neurotoxins_LC_scorpion"/>
    <property type="match status" value="1"/>
</dbReference>
<dbReference type="FunFam" id="3.30.30.10:FF:000002">
    <property type="entry name" value="Alpha-like toxin BmK-M1"/>
    <property type="match status" value="1"/>
</dbReference>
<dbReference type="Gene3D" id="3.30.30.10">
    <property type="entry name" value="Knottin, scorpion toxin-like"/>
    <property type="match status" value="1"/>
</dbReference>
<dbReference type="InterPro" id="IPR044062">
    <property type="entry name" value="LCN-type_CS_alpha_beta_dom"/>
</dbReference>
<dbReference type="InterPro" id="IPR003614">
    <property type="entry name" value="Scorpion_toxin-like"/>
</dbReference>
<dbReference type="InterPro" id="IPR036574">
    <property type="entry name" value="Scorpion_toxin-like_sf"/>
</dbReference>
<dbReference type="InterPro" id="IPR018218">
    <property type="entry name" value="Scorpion_toxinL"/>
</dbReference>
<dbReference type="InterPro" id="IPR002061">
    <property type="entry name" value="Scorpion_toxinL/defensin"/>
</dbReference>
<dbReference type="Pfam" id="PF00537">
    <property type="entry name" value="Toxin_3"/>
    <property type="match status" value="1"/>
</dbReference>
<dbReference type="PRINTS" id="PR00285">
    <property type="entry name" value="SCORPNTOXIN"/>
</dbReference>
<dbReference type="SMART" id="SM00505">
    <property type="entry name" value="Knot1"/>
    <property type="match status" value="1"/>
</dbReference>
<dbReference type="SUPFAM" id="SSF57095">
    <property type="entry name" value="Scorpion toxin-like"/>
    <property type="match status" value="1"/>
</dbReference>
<dbReference type="PROSITE" id="PS51863">
    <property type="entry name" value="LCN_CSAB"/>
    <property type="match status" value="1"/>
</dbReference>
<sequence>MNSLLMITACLALIGTVWAKEGYLVNHSTGCKYECFKLGDNDYCLRECRQQYGKGAGGYCYAFGCWCTHLYEQAVVWPLPKKTCNGK</sequence>
<evidence type="ECO:0000250" key="1">
    <source>
        <dbReference type="UniProtKB" id="P60266"/>
    </source>
</evidence>
<evidence type="ECO:0000255" key="2">
    <source>
        <dbReference type="PROSITE-ProRule" id="PRU01210"/>
    </source>
</evidence>
<evidence type="ECO:0000269" key="3">
    <source>
    </source>
</evidence>
<evidence type="ECO:0000269" key="4">
    <source>
    </source>
</evidence>
<evidence type="ECO:0000269" key="5">
    <source>
    </source>
</evidence>
<evidence type="ECO:0000269" key="6">
    <source>
    </source>
</evidence>
<evidence type="ECO:0000303" key="7">
    <source>
    </source>
</evidence>
<evidence type="ECO:0000303" key="8">
    <source>
    </source>
</evidence>
<evidence type="ECO:0000305" key="9"/>
<evidence type="ECO:0000305" key="10">
    <source>
    </source>
</evidence>
<evidence type="ECO:0000305" key="11">
    <source>
    </source>
</evidence>